<gene>
    <name evidence="1" type="primary">plsX</name>
    <name type="ordered locus">Clos_1451</name>
</gene>
<protein>
    <recommendedName>
        <fullName evidence="1">Phosphate acyltransferase</fullName>
        <ecNumber evidence="1">2.3.1.274</ecNumber>
    </recommendedName>
    <alternativeName>
        <fullName evidence="1">Acyl-ACP phosphotransacylase</fullName>
    </alternativeName>
    <alternativeName>
        <fullName evidence="1">Acyl-[acyl-carrier-protein]--phosphate acyltransferase</fullName>
    </alternativeName>
    <alternativeName>
        <fullName evidence="1">Phosphate-acyl-ACP acyltransferase</fullName>
    </alternativeName>
</protein>
<accession>A8MHA8</accession>
<evidence type="ECO:0000255" key="1">
    <source>
        <dbReference type="HAMAP-Rule" id="MF_00019"/>
    </source>
</evidence>
<reference key="1">
    <citation type="submission" date="2007-10" db="EMBL/GenBank/DDBJ databases">
        <title>Complete genome of Alkaliphilus oremlandii OhILAs.</title>
        <authorList>
            <person name="Copeland A."/>
            <person name="Lucas S."/>
            <person name="Lapidus A."/>
            <person name="Barry K."/>
            <person name="Detter J.C."/>
            <person name="Glavina del Rio T."/>
            <person name="Hammon N."/>
            <person name="Israni S."/>
            <person name="Dalin E."/>
            <person name="Tice H."/>
            <person name="Pitluck S."/>
            <person name="Chain P."/>
            <person name="Malfatti S."/>
            <person name="Shin M."/>
            <person name="Vergez L."/>
            <person name="Schmutz J."/>
            <person name="Larimer F."/>
            <person name="Land M."/>
            <person name="Hauser L."/>
            <person name="Kyrpides N."/>
            <person name="Mikhailova N."/>
            <person name="Stolz J.F."/>
            <person name="Dawson A."/>
            <person name="Fisher E."/>
            <person name="Crable B."/>
            <person name="Perera E."/>
            <person name="Lisak J."/>
            <person name="Ranganathan M."/>
            <person name="Basu P."/>
            <person name="Richardson P."/>
        </authorList>
    </citation>
    <scope>NUCLEOTIDE SEQUENCE [LARGE SCALE GENOMIC DNA]</scope>
    <source>
        <strain>OhILAs</strain>
    </source>
</reference>
<feature type="chain" id="PRO_1000057167" description="Phosphate acyltransferase">
    <location>
        <begin position="1"/>
        <end position="335"/>
    </location>
</feature>
<proteinExistence type="inferred from homology"/>
<comment type="function">
    <text evidence="1">Catalyzes the reversible formation of acyl-phosphate (acyl-PO(4)) from acyl-[acyl-carrier-protein] (acyl-ACP). This enzyme utilizes acyl-ACP as fatty acyl donor, but not acyl-CoA.</text>
</comment>
<comment type="catalytic activity">
    <reaction evidence="1">
        <text>a fatty acyl-[ACP] + phosphate = an acyl phosphate + holo-[ACP]</text>
        <dbReference type="Rhea" id="RHEA:42292"/>
        <dbReference type="Rhea" id="RHEA-COMP:9685"/>
        <dbReference type="Rhea" id="RHEA-COMP:14125"/>
        <dbReference type="ChEBI" id="CHEBI:43474"/>
        <dbReference type="ChEBI" id="CHEBI:59918"/>
        <dbReference type="ChEBI" id="CHEBI:64479"/>
        <dbReference type="ChEBI" id="CHEBI:138651"/>
        <dbReference type="EC" id="2.3.1.274"/>
    </reaction>
</comment>
<comment type="pathway">
    <text evidence="1">Lipid metabolism; phospholipid metabolism.</text>
</comment>
<comment type="subunit">
    <text evidence="1">Homodimer. Probably interacts with PlsY.</text>
</comment>
<comment type="subcellular location">
    <subcellularLocation>
        <location evidence="1">Cytoplasm</location>
    </subcellularLocation>
    <text evidence="1">Associated with the membrane possibly through PlsY.</text>
</comment>
<comment type="similarity">
    <text evidence="1">Belongs to the PlsX family.</text>
</comment>
<organism>
    <name type="scientific">Alkaliphilus oremlandii (strain OhILAs)</name>
    <name type="common">Clostridium oremlandii (strain OhILAs)</name>
    <dbReference type="NCBI Taxonomy" id="350688"/>
    <lineage>
        <taxon>Bacteria</taxon>
        <taxon>Bacillati</taxon>
        <taxon>Bacillota</taxon>
        <taxon>Clostridia</taxon>
        <taxon>Peptostreptococcales</taxon>
        <taxon>Natronincolaceae</taxon>
        <taxon>Alkaliphilus</taxon>
    </lineage>
</organism>
<name>PLSX_ALKOO</name>
<keyword id="KW-0963">Cytoplasm</keyword>
<keyword id="KW-0444">Lipid biosynthesis</keyword>
<keyword id="KW-0443">Lipid metabolism</keyword>
<keyword id="KW-0594">Phospholipid biosynthesis</keyword>
<keyword id="KW-1208">Phospholipid metabolism</keyword>
<keyword id="KW-1185">Reference proteome</keyword>
<keyword id="KW-0808">Transferase</keyword>
<dbReference type="EC" id="2.3.1.274" evidence="1"/>
<dbReference type="EMBL" id="CP000853">
    <property type="protein sequence ID" value="ABW18995.1"/>
    <property type="molecule type" value="Genomic_DNA"/>
</dbReference>
<dbReference type="RefSeq" id="WP_012159307.1">
    <property type="nucleotide sequence ID" value="NC_009922.1"/>
</dbReference>
<dbReference type="SMR" id="A8MHA8"/>
<dbReference type="STRING" id="350688.Clos_1451"/>
<dbReference type="KEGG" id="aoe:Clos_1451"/>
<dbReference type="eggNOG" id="COG0416">
    <property type="taxonomic scope" value="Bacteria"/>
</dbReference>
<dbReference type="HOGENOM" id="CLU_039379_1_1_9"/>
<dbReference type="OrthoDB" id="9806408at2"/>
<dbReference type="UniPathway" id="UPA00085"/>
<dbReference type="Proteomes" id="UP000000269">
    <property type="component" value="Chromosome"/>
</dbReference>
<dbReference type="GO" id="GO:0005737">
    <property type="term" value="C:cytoplasm"/>
    <property type="evidence" value="ECO:0007669"/>
    <property type="project" value="UniProtKB-SubCell"/>
</dbReference>
<dbReference type="GO" id="GO:0043811">
    <property type="term" value="F:phosphate:acyl-[acyl carrier protein] acyltransferase activity"/>
    <property type="evidence" value="ECO:0007669"/>
    <property type="project" value="UniProtKB-UniRule"/>
</dbReference>
<dbReference type="GO" id="GO:0006633">
    <property type="term" value="P:fatty acid biosynthetic process"/>
    <property type="evidence" value="ECO:0007669"/>
    <property type="project" value="UniProtKB-UniRule"/>
</dbReference>
<dbReference type="GO" id="GO:0008654">
    <property type="term" value="P:phospholipid biosynthetic process"/>
    <property type="evidence" value="ECO:0007669"/>
    <property type="project" value="UniProtKB-KW"/>
</dbReference>
<dbReference type="Gene3D" id="3.40.718.10">
    <property type="entry name" value="Isopropylmalate Dehydrogenase"/>
    <property type="match status" value="1"/>
</dbReference>
<dbReference type="HAMAP" id="MF_00019">
    <property type="entry name" value="PlsX"/>
    <property type="match status" value="1"/>
</dbReference>
<dbReference type="InterPro" id="IPR003664">
    <property type="entry name" value="FA_synthesis"/>
</dbReference>
<dbReference type="InterPro" id="IPR012281">
    <property type="entry name" value="Phospholipid_synth_PlsX-like"/>
</dbReference>
<dbReference type="NCBIfam" id="TIGR00182">
    <property type="entry name" value="plsX"/>
    <property type="match status" value="1"/>
</dbReference>
<dbReference type="PANTHER" id="PTHR30100">
    <property type="entry name" value="FATTY ACID/PHOSPHOLIPID SYNTHESIS PROTEIN PLSX"/>
    <property type="match status" value="1"/>
</dbReference>
<dbReference type="PANTHER" id="PTHR30100:SF1">
    <property type="entry name" value="PHOSPHATE ACYLTRANSFERASE"/>
    <property type="match status" value="1"/>
</dbReference>
<dbReference type="Pfam" id="PF02504">
    <property type="entry name" value="FA_synthesis"/>
    <property type="match status" value="1"/>
</dbReference>
<dbReference type="PIRSF" id="PIRSF002465">
    <property type="entry name" value="Phsphlp_syn_PlsX"/>
    <property type="match status" value="1"/>
</dbReference>
<dbReference type="SUPFAM" id="SSF53659">
    <property type="entry name" value="Isocitrate/Isopropylmalate dehydrogenase-like"/>
    <property type="match status" value="1"/>
</dbReference>
<sequence>MKIVIDAMGGDHAPFVTVEGAVEAVKNYDIHIILTGNQPLIENELVKYDYPKERIEVIHCSEQITNEDKPVISIRRKKDSSMVVGLKLVKEKKADAIISAGNSGALLAGGLLVLGRIKGIDRPALAPVYPTAKGISVLVDAGANAECKPRNLLEFGIMGSIYAEKVLEIKNPKVCTVNIGIEEEKGTELVKEAYQLCKEGPFNFQGNVEAREIPNGYADVIVCDGFTGNVILKLTEGLASSIFSLLKEEFLKNTFTKIGALLLKPGLKSFKKKLDYTEYGGAPLLGVKGVLIKAHGSSDGKAIKNAVGQAIKFMDNKVLEHISEGVSSLGDDEFE</sequence>